<gene>
    <name type="ordered locus">KPK_2870</name>
</gene>
<protein>
    <recommendedName>
        <fullName evidence="1">UPF0060 membrane protein KPK_2870</fullName>
    </recommendedName>
</protein>
<accession>B5XR73</accession>
<sequence length="108" mass="11749">MLKTTLLFFATALCEIIGCYLPWLWLKRGATPLLLIPTGLALALFVWLLTLHPAASGRVYAAYGGVYVCTALLWLRVVDGVKLSHYDWAGAIIALCGMLIIVAGWGRA</sequence>
<dbReference type="EMBL" id="CP000964">
    <property type="protein sequence ID" value="ACI11850.1"/>
    <property type="molecule type" value="Genomic_DNA"/>
</dbReference>
<dbReference type="KEGG" id="kpe:KPK_2870"/>
<dbReference type="HOGENOM" id="CLU_117653_2_1_6"/>
<dbReference type="BioCyc" id="KPNE507522:GI0B-2858-MONOMER"/>
<dbReference type="Proteomes" id="UP000001734">
    <property type="component" value="Chromosome"/>
</dbReference>
<dbReference type="GO" id="GO:0005886">
    <property type="term" value="C:plasma membrane"/>
    <property type="evidence" value="ECO:0007669"/>
    <property type="project" value="UniProtKB-SubCell"/>
</dbReference>
<dbReference type="HAMAP" id="MF_00010">
    <property type="entry name" value="UPF0060"/>
    <property type="match status" value="1"/>
</dbReference>
<dbReference type="InterPro" id="IPR003844">
    <property type="entry name" value="UPF0060"/>
</dbReference>
<dbReference type="NCBIfam" id="NF002586">
    <property type="entry name" value="PRK02237.1"/>
    <property type="match status" value="1"/>
</dbReference>
<dbReference type="PANTHER" id="PTHR36116">
    <property type="entry name" value="UPF0060 MEMBRANE PROTEIN YNFA"/>
    <property type="match status" value="1"/>
</dbReference>
<dbReference type="PANTHER" id="PTHR36116:SF1">
    <property type="entry name" value="UPF0060 MEMBRANE PROTEIN YNFA"/>
    <property type="match status" value="1"/>
</dbReference>
<dbReference type="Pfam" id="PF02694">
    <property type="entry name" value="UPF0060"/>
    <property type="match status" value="1"/>
</dbReference>
<dbReference type="SUPFAM" id="SSF103481">
    <property type="entry name" value="Multidrug resistance efflux transporter EmrE"/>
    <property type="match status" value="1"/>
</dbReference>
<comment type="subcellular location">
    <subcellularLocation>
        <location evidence="1">Cell inner membrane</location>
        <topology evidence="1">Multi-pass membrane protein</topology>
    </subcellularLocation>
</comment>
<comment type="similarity">
    <text evidence="1">Belongs to the UPF0060 family.</text>
</comment>
<organism>
    <name type="scientific">Klebsiella pneumoniae (strain 342)</name>
    <dbReference type="NCBI Taxonomy" id="507522"/>
    <lineage>
        <taxon>Bacteria</taxon>
        <taxon>Pseudomonadati</taxon>
        <taxon>Pseudomonadota</taxon>
        <taxon>Gammaproteobacteria</taxon>
        <taxon>Enterobacterales</taxon>
        <taxon>Enterobacteriaceae</taxon>
        <taxon>Klebsiella/Raoultella group</taxon>
        <taxon>Klebsiella</taxon>
        <taxon>Klebsiella pneumoniae complex</taxon>
    </lineage>
</organism>
<feature type="chain" id="PRO_1000089245" description="UPF0060 membrane protein KPK_2870">
    <location>
        <begin position="1"/>
        <end position="108"/>
    </location>
</feature>
<feature type="transmembrane region" description="Helical" evidence="1">
    <location>
        <begin position="6"/>
        <end position="26"/>
    </location>
</feature>
<feature type="transmembrane region" description="Helical" evidence="1">
    <location>
        <begin position="29"/>
        <end position="49"/>
    </location>
</feature>
<feature type="transmembrane region" description="Helical" evidence="1">
    <location>
        <begin position="61"/>
        <end position="81"/>
    </location>
</feature>
<feature type="transmembrane region" description="Helical" evidence="1">
    <location>
        <begin position="86"/>
        <end position="106"/>
    </location>
</feature>
<reference key="1">
    <citation type="journal article" date="2008" name="PLoS Genet.">
        <title>Complete genome sequence of the N2-fixing broad host range endophyte Klebsiella pneumoniae 342 and virulence predictions verified in mice.</title>
        <authorList>
            <person name="Fouts D.E."/>
            <person name="Tyler H.L."/>
            <person name="DeBoy R.T."/>
            <person name="Daugherty S."/>
            <person name="Ren Q."/>
            <person name="Badger J.H."/>
            <person name="Durkin A.S."/>
            <person name="Huot H."/>
            <person name="Shrivastava S."/>
            <person name="Kothari S."/>
            <person name="Dodson R.J."/>
            <person name="Mohamoud Y."/>
            <person name="Khouri H."/>
            <person name="Roesch L.F.W."/>
            <person name="Krogfelt K.A."/>
            <person name="Struve C."/>
            <person name="Triplett E.W."/>
            <person name="Methe B.A."/>
        </authorList>
    </citation>
    <scope>NUCLEOTIDE SEQUENCE [LARGE SCALE GENOMIC DNA]</scope>
    <source>
        <strain>342</strain>
    </source>
</reference>
<name>Y2870_KLEP3</name>
<proteinExistence type="inferred from homology"/>
<keyword id="KW-0997">Cell inner membrane</keyword>
<keyword id="KW-1003">Cell membrane</keyword>
<keyword id="KW-0472">Membrane</keyword>
<keyword id="KW-0812">Transmembrane</keyword>
<keyword id="KW-1133">Transmembrane helix</keyword>
<evidence type="ECO:0000255" key="1">
    <source>
        <dbReference type="HAMAP-Rule" id="MF_00010"/>
    </source>
</evidence>